<comment type="function">
    <text evidence="1">Involved in the gluconeogenesis. Catalyzes stereospecifically the conversion of dihydroxyacetone phosphate (DHAP) to D-glyceraldehyde-3-phosphate (G3P).</text>
</comment>
<comment type="catalytic activity">
    <reaction evidence="1">
        <text>D-glyceraldehyde 3-phosphate = dihydroxyacetone phosphate</text>
        <dbReference type="Rhea" id="RHEA:18585"/>
        <dbReference type="ChEBI" id="CHEBI:57642"/>
        <dbReference type="ChEBI" id="CHEBI:59776"/>
        <dbReference type="EC" id="5.3.1.1"/>
    </reaction>
</comment>
<comment type="pathway">
    <text evidence="1">Carbohydrate biosynthesis; gluconeogenesis.</text>
</comment>
<comment type="pathway">
    <text evidence="1">Carbohydrate degradation; glycolysis; D-glyceraldehyde 3-phosphate from glycerone phosphate: step 1/1.</text>
</comment>
<comment type="subunit">
    <text evidence="1">Homodimer.</text>
</comment>
<comment type="subcellular location">
    <subcellularLocation>
        <location evidence="1">Cytoplasm</location>
    </subcellularLocation>
</comment>
<comment type="similarity">
    <text evidence="1">Belongs to the triosephosphate isomerase family.</text>
</comment>
<keyword id="KW-0963">Cytoplasm</keyword>
<keyword id="KW-0312">Gluconeogenesis</keyword>
<keyword id="KW-0324">Glycolysis</keyword>
<keyword id="KW-0413">Isomerase</keyword>
<dbReference type="EC" id="5.3.1.1" evidence="1"/>
<dbReference type="EMBL" id="CP000325">
    <property type="protein sequence ID" value="ABL04303.1"/>
    <property type="molecule type" value="Genomic_DNA"/>
</dbReference>
<dbReference type="RefSeq" id="WP_011739923.1">
    <property type="nucleotide sequence ID" value="NC_008611.1"/>
</dbReference>
<dbReference type="SMR" id="A0PPN4"/>
<dbReference type="GeneID" id="34343749"/>
<dbReference type="KEGG" id="mul:MUL_1830"/>
<dbReference type="eggNOG" id="COG0149">
    <property type="taxonomic scope" value="Bacteria"/>
</dbReference>
<dbReference type="HOGENOM" id="CLU_024251_2_3_11"/>
<dbReference type="UniPathway" id="UPA00109">
    <property type="reaction ID" value="UER00189"/>
</dbReference>
<dbReference type="UniPathway" id="UPA00138"/>
<dbReference type="Proteomes" id="UP000000765">
    <property type="component" value="Chromosome"/>
</dbReference>
<dbReference type="GO" id="GO:0005829">
    <property type="term" value="C:cytosol"/>
    <property type="evidence" value="ECO:0007669"/>
    <property type="project" value="TreeGrafter"/>
</dbReference>
<dbReference type="GO" id="GO:0004807">
    <property type="term" value="F:triose-phosphate isomerase activity"/>
    <property type="evidence" value="ECO:0007669"/>
    <property type="project" value="UniProtKB-UniRule"/>
</dbReference>
<dbReference type="GO" id="GO:0006094">
    <property type="term" value="P:gluconeogenesis"/>
    <property type="evidence" value="ECO:0007669"/>
    <property type="project" value="UniProtKB-UniRule"/>
</dbReference>
<dbReference type="GO" id="GO:0046166">
    <property type="term" value="P:glyceraldehyde-3-phosphate biosynthetic process"/>
    <property type="evidence" value="ECO:0007669"/>
    <property type="project" value="TreeGrafter"/>
</dbReference>
<dbReference type="GO" id="GO:0019563">
    <property type="term" value="P:glycerol catabolic process"/>
    <property type="evidence" value="ECO:0007669"/>
    <property type="project" value="TreeGrafter"/>
</dbReference>
<dbReference type="GO" id="GO:0006096">
    <property type="term" value="P:glycolytic process"/>
    <property type="evidence" value="ECO:0007669"/>
    <property type="project" value="UniProtKB-UniRule"/>
</dbReference>
<dbReference type="CDD" id="cd00311">
    <property type="entry name" value="TIM"/>
    <property type="match status" value="1"/>
</dbReference>
<dbReference type="FunFam" id="3.20.20.70:FF:000020">
    <property type="entry name" value="Triosephosphate isomerase"/>
    <property type="match status" value="1"/>
</dbReference>
<dbReference type="Gene3D" id="3.20.20.70">
    <property type="entry name" value="Aldolase class I"/>
    <property type="match status" value="1"/>
</dbReference>
<dbReference type="HAMAP" id="MF_00147_B">
    <property type="entry name" value="TIM_B"/>
    <property type="match status" value="1"/>
</dbReference>
<dbReference type="InterPro" id="IPR013785">
    <property type="entry name" value="Aldolase_TIM"/>
</dbReference>
<dbReference type="InterPro" id="IPR035990">
    <property type="entry name" value="TIM_sf"/>
</dbReference>
<dbReference type="InterPro" id="IPR022896">
    <property type="entry name" value="TrioseP_Isoase_bac/euk"/>
</dbReference>
<dbReference type="InterPro" id="IPR000652">
    <property type="entry name" value="Triosephosphate_isomerase"/>
</dbReference>
<dbReference type="InterPro" id="IPR020861">
    <property type="entry name" value="Triosephosphate_isomerase_AS"/>
</dbReference>
<dbReference type="NCBIfam" id="TIGR00419">
    <property type="entry name" value="tim"/>
    <property type="match status" value="1"/>
</dbReference>
<dbReference type="PANTHER" id="PTHR21139">
    <property type="entry name" value="TRIOSEPHOSPHATE ISOMERASE"/>
    <property type="match status" value="1"/>
</dbReference>
<dbReference type="PANTHER" id="PTHR21139:SF42">
    <property type="entry name" value="TRIOSEPHOSPHATE ISOMERASE"/>
    <property type="match status" value="1"/>
</dbReference>
<dbReference type="Pfam" id="PF00121">
    <property type="entry name" value="TIM"/>
    <property type="match status" value="1"/>
</dbReference>
<dbReference type="SUPFAM" id="SSF51351">
    <property type="entry name" value="Triosephosphate isomerase (TIM)"/>
    <property type="match status" value="1"/>
</dbReference>
<dbReference type="PROSITE" id="PS00171">
    <property type="entry name" value="TIM_1"/>
    <property type="match status" value="1"/>
</dbReference>
<dbReference type="PROSITE" id="PS51440">
    <property type="entry name" value="TIM_2"/>
    <property type="match status" value="1"/>
</dbReference>
<organism>
    <name type="scientific">Mycobacterium ulcerans (strain Agy99)</name>
    <dbReference type="NCBI Taxonomy" id="362242"/>
    <lineage>
        <taxon>Bacteria</taxon>
        <taxon>Bacillati</taxon>
        <taxon>Actinomycetota</taxon>
        <taxon>Actinomycetes</taxon>
        <taxon>Mycobacteriales</taxon>
        <taxon>Mycobacteriaceae</taxon>
        <taxon>Mycobacterium</taxon>
        <taxon>Mycobacterium ulcerans group</taxon>
    </lineage>
</organism>
<protein>
    <recommendedName>
        <fullName evidence="1">Triosephosphate isomerase</fullName>
        <shortName evidence="1">TIM</shortName>
        <shortName evidence="1">TPI</shortName>
        <ecNumber evidence="1">5.3.1.1</ecNumber>
    </recommendedName>
    <alternativeName>
        <fullName evidence="1">Triose-phosphate isomerase</fullName>
    </alternativeName>
</protein>
<sequence>MSRKPLIAGNWKMNLNHFEAIALVQKIAFSLPDKYYDKVDVTVIPPFTDLRSVQTLVDGDKLRLTYGGQDLSQHDSGAYTGDISGAFLAKLGCSFVVVGHSERRTYHNEDDALVAAKAAAALKHDLTPIVCIGEHLDVREAGNHVAHNVEQLRGSLSGLSAEQISKVVIAYEPVWAIGTGRVAGAADAQEVCAAIRSELGSLASPQIADAVRVLYGGSVNAKNIGELIAQADVDGGLVGGASLDGEQFATLAAIAAGGPLP</sequence>
<evidence type="ECO:0000255" key="1">
    <source>
        <dbReference type="HAMAP-Rule" id="MF_00147"/>
    </source>
</evidence>
<proteinExistence type="inferred from homology"/>
<name>TPIS_MYCUA</name>
<reference key="1">
    <citation type="journal article" date="2007" name="Genome Res.">
        <title>Reductive evolution and niche adaptation inferred from the genome of Mycobacterium ulcerans, the causative agent of Buruli ulcer.</title>
        <authorList>
            <person name="Stinear T.P."/>
            <person name="Seemann T."/>
            <person name="Pidot S."/>
            <person name="Frigui W."/>
            <person name="Reysset G."/>
            <person name="Garnier T."/>
            <person name="Meurice G."/>
            <person name="Simon D."/>
            <person name="Bouchier C."/>
            <person name="Ma L."/>
            <person name="Tichit M."/>
            <person name="Porter J.L."/>
            <person name="Ryan J."/>
            <person name="Johnson P.D.R."/>
            <person name="Davies J.K."/>
            <person name="Jenkin G.A."/>
            <person name="Small P.L.C."/>
            <person name="Jones L.M."/>
            <person name="Tekaia F."/>
            <person name="Laval F."/>
            <person name="Daffe M."/>
            <person name="Parkhill J."/>
            <person name="Cole S.T."/>
        </authorList>
    </citation>
    <scope>NUCLEOTIDE SEQUENCE [LARGE SCALE GENOMIC DNA]</scope>
    <source>
        <strain>Agy99</strain>
    </source>
</reference>
<accession>A0PPN4</accession>
<feature type="chain" id="PRO_0000307509" description="Triosephosphate isomerase">
    <location>
        <begin position="1"/>
        <end position="261"/>
    </location>
</feature>
<feature type="active site" description="Electrophile" evidence="1">
    <location>
        <position position="100"/>
    </location>
</feature>
<feature type="active site" description="Proton acceptor" evidence="1">
    <location>
        <position position="172"/>
    </location>
</feature>
<feature type="binding site" evidence="1">
    <location>
        <begin position="10"/>
        <end position="12"/>
    </location>
    <ligand>
        <name>substrate</name>
    </ligand>
</feature>
<feature type="binding site" evidence="1">
    <location>
        <position position="178"/>
    </location>
    <ligand>
        <name>substrate</name>
    </ligand>
</feature>
<feature type="binding site" evidence="1">
    <location>
        <position position="218"/>
    </location>
    <ligand>
        <name>substrate</name>
    </ligand>
</feature>
<feature type="binding site" evidence="1">
    <location>
        <begin position="239"/>
        <end position="240"/>
    </location>
    <ligand>
        <name>substrate</name>
    </ligand>
</feature>
<gene>
    <name evidence="1" type="primary">tpiA</name>
    <name type="ordered locus">MUL_1830</name>
</gene>